<proteinExistence type="evidence at protein level"/>
<name>BDS2A_ANTMC</name>
<protein>
    <recommendedName>
        <fullName evidence="5">Delta-actitoxin-Amc2a</fullName>
        <shortName evidence="5">Delta-AITX-Amc2a</shortName>
    </recommendedName>
    <alternativeName>
        <fullName evidence="4">Peptide toxin Am II</fullName>
    </alternativeName>
    <alternativeName>
        <fullName evidence="6">Peptide toxin Am-2</fullName>
    </alternativeName>
</protein>
<sequence>MNKVLFLCLVVLCATSAFAAEEEYVERAPVKRALLSCRCEGKTEYGDKWLFHGGCPNNYGYNYKCFMKPGAVCCYPQNGR</sequence>
<reference key="1">
    <citation type="journal article" date="2005" name="Toxicon">
        <title>Isolation and molecular cloning of novel peptide toxins from the sea anemone Antheopsis maculata.</title>
        <authorList>
            <person name="Honma T."/>
            <person name="Hasegawa Y."/>
            <person name="Ishida M."/>
            <person name="Nagai H."/>
            <person name="Nagashima Y."/>
            <person name="Shiomi K."/>
        </authorList>
    </citation>
    <scope>NUCLEOTIDE SEQUENCE [MRNA]</scope>
    <scope>FUNCTION</scope>
    <scope>MASS SPECTROMETRY</scope>
    <scope>HYDROXYLATION AT PRO-56</scope>
    <scope>TOXIC DOSE</scope>
</reference>
<reference key="2">
    <citation type="journal article" date="2012" name="Toxicon">
        <title>Development of a rational nomenclature for naming peptide and protein toxins from sea anemones.</title>
        <authorList>
            <person name="Oliveira J.S."/>
            <person name="Fuentes-Silva D."/>
            <person name="King G.F."/>
        </authorList>
    </citation>
    <scope>NOMENCLATURE</scope>
</reference>
<dbReference type="EMBL" id="AB180686">
    <property type="protein sequence ID" value="BAD74022.1"/>
    <property type="molecule type" value="mRNA"/>
</dbReference>
<dbReference type="SMR" id="P69930"/>
<dbReference type="GO" id="GO:0005576">
    <property type="term" value="C:extracellular region"/>
    <property type="evidence" value="ECO:0007669"/>
    <property type="project" value="UniProtKB-SubCell"/>
</dbReference>
<dbReference type="GO" id="GO:0042151">
    <property type="term" value="C:nematocyst"/>
    <property type="evidence" value="ECO:0007669"/>
    <property type="project" value="UniProtKB-SubCell"/>
</dbReference>
<dbReference type="GO" id="GO:0008200">
    <property type="term" value="F:ion channel inhibitor activity"/>
    <property type="evidence" value="ECO:0007669"/>
    <property type="project" value="InterPro"/>
</dbReference>
<dbReference type="GO" id="GO:0090729">
    <property type="term" value="F:toxin activity"/>
    <property type="evidence" value="ECO:0007669"/>
    <property type="project" value="UniProtKB-KW"/>
</dbReference>
<dbReference type="Gene3D" id="2.20.20.10">
    <property type="entry name" value="Anthopleurin-A"/>
    <property type="match status" value="1"/>
</dbReference>
<dbReference type="InterPro" id="IPR012414">
    <property type="entry name" value="BDS_K_chnl_tox"/>
</dbReference>
<dbReference type="InterPro" id="IPR023355">
    <property type="entry name" value="Myo_ane_neurotoxin_sf"/>
</dbReference>
<dbReference type="Pfam" id="PF07936">
    <property type="entry name" value="Defensin_4"/>
    <property type="match status" value="1"/>
</dbReference>
<dbReference type="SUPFAM" id="SSF57392">
    <property type="entry name" value="Defensin-like"/>
    <property type="match status" value="1"/>
</dbReference>
<comment type="function">
    <text evidence="3">Neurotoxon that induces paralysis when injected into crabs.</text>
</comment>
<comment type="subcellular location">
    <subcellularLocation>
        <location evidence="6">Secreted</location>
    </subcellularLocation>
    <subcellularLocation>
        <location evidence="6">Nematocyst</location>
    </subcellularLocation>
</comment>
<comment type="mass spectrometry"/>
<comment type="toxic dose">
    <text evidence="3">PD(50) is 420 ug/kg into crabs.</text>
</comment>
<comment type="similarity">
    <text evidence="6">Belongs to the sea anemone type 3 (BDS) potassium channel toxin family.</text>
</comment>
<comment type="caution">
    <text evidence="7">There is no mention of the activity in PubMed:15581681. The Greek letter 'delta' in the name delta-AITX-Amc2a (which indicates an inhibition of sodium channels) has been deduced from the toxin paralytic activity to crabs.</text>
</comment>
<accession>P69930</accession>
<accession>Q5R214</accession>
<evidence type="ECO:0000250" key="1">
    <source>
        <dbReference type="UniProtKB" id="P11494"/>
    </source>
</evidence>
<evidence type="ECO:0000255" key="2"/>
<evidence type="ECO:0000269" key="3">
    <source>
    </source>
</evidence>
<evidence type="ECO:0000303" key="4">
    <source>
    </source>
</evidence>
<evidence type="ECO:0000303" key="5">
    <source>
    </source>
</evidence>
<evidence type="ECO:0000305" key="6"/>
<evidence type="ECO:0000305" key="7">
    <source>
    </source>
</evidence>
<organism>
    <name type="scientific">Antheopsis maculata</name>
    <name type="common">Sea anemone</name>
    <dbReference type="NCBI Taxonomy" id="280228"/>
    <lineage>
        <taxon>Eukaryota</taxon>
        <taxon>Metazoa</taxon>
        <taxon>Cnidaria</taxon>
        <taxon>Anthozoa</taxon>
        <taxon>Hexacorallia</taxon>
        <taxon>Actiniaria</taxon>
        <taxon>Actiniidae</taxon>
        <taxon>Antheopsis</taxon>
    </lineage>
</organism>
<feature type="signal peptide" evidence="2">
    <location>
        <begin position="1"/>
        <end position="19"/>
    </location>
</feature>
<feature type="propeptide" id="PRO_0000034861" evidence="3">
    <location>
        <begin position="20"/>
        <end position="30"/>
    </location>
</feature>
<feature type="chain" id="PRO_0000034862" description="Delta-actitoxin-Amc2a" evidence="3">
    <location>
        <begin position="33"/>
        <end position="78"/>
    </location>
</feature>
<feature type="modified residue" description="Hydroxyproline" evidence="3">
    <location>
        <position position="56"/>
    </location>
</feature>
<feature type="disulfide bond" evidence="1">
    <location>
        <begin position="37"/>
        <end position="73"/>
    </location>
</feature>
<feature type="disulfide bond" evidence="1">
    <location>
        <begin position="39"/>
        <end position="65"/>
    </location>
</feature>
<feature type="disulfide bond" evidence="1">
    <location>
        <begin position="55"/>
        <end position="74"/>
    </location>
</feature>
<keyword id="KW-0165">Cleavage on pair of basic residues</keyword>
<keyword id="KW-1015">Disulfide bond</keyword>
<keyword id="KW-0379">Hydroxylation</keyword>
<keyword id="KW-0166">Nematocyst</keyword>
<keyword id="KW-0528">Neurotoxin</keyword>
<keyword id="KW-0964">Secreted</keyword>
<keyword id="KW-0732">Signal</keyword>
<keyword id="KW-0800">Toxin</keyword>